<feature type="chain" id="PRO_0000292287" description="Pyridoxine/pyridoxamine 5'-phosphate oxidase">
    <location>
        <begin position="1"/>
        <end position="196"/>
    </location>
</feature>
<feature type="binding site" evidence="1">
    <location>
        <begin position="44"/>
        <end position="49"/>
    </location>
    <ligand>
        <name>FMN</name>
        <dbReference type="ChEBI" id="CHEBI:58210"/>
    </ligand>
</feature>
<feature type="binding site" evidence="1">
    <location>
        <position position="49"/>
    </location>
    <ligand>
        <name>substrate</name>
    </ligand>
</feature>
<feature type="binding site" evidence="1">
    <location>
        <begin position="59"/>
        <end position="60"/>
    </location>
    <ligand>
        <name>FMN</name>
        <dbReference type="ChEBI" id="CHEBI:58210"/>
    </ligand>
</feature>
<feature type="binding site" evidence="1">
    <location>
        <position position="65"/>
    </location>
    <ligand>
        <name>FMN</name>
        <dbReference type="ChEBI" id="CHEBI:58210"/>
    </ligand>
</feature>
<feature type="binding site" evidence="1">
    <location>
        <position position="66"/>
    </location>
    <ligand>
        <name>FMN</name>
        <dbReference type="ChEBI" id="CHEBI:58210"/>
    </ligand>
</feature>
<feature type="binding site" evidence="1">
    <location>
        <position position="88"/>
    </location>
    <ligand>
        <name>FMN</name>
        <dbReference type="ChEBI" id="CHEBI:58210"/>
    </ligand>
</feature>
<feature type="binding site" evidence="1">
    <location>
        <position position="106"/>
    </location>
    <ligand>
        <name>substrate</name>
    </ligand>
</feature>
<feature type="binding site" evidence="1">
    <location>
        <position position="110"/>
    </location>
    <ligand>
        <name>substrate</name>
    </ligand>
</feature>
<feature type="binding site" evidence="1">
    <location>
        <position position="114"/>
    </location>
    <ligand>
        <name>substrate</name>
    </ligand>
</feature>
<feature type="binding site" evidence="1">
    <location>
        <begin position="123"/>
        <end position="124"/>
    </location>
    <ligand>
        <name>FMN</name>
        <dbReference type="ChEBI" id="CHEBI:58210"/>
    </ligand>
</feature>
<feature type="binding site" evidence="1">
    <location>
        <position position="169"/>
    </location>
    <ligand>
        <name>FMN</name>
        <dbReference type="ChEBI" id="CHEBI:58210"/>
    </ligand>
</feature>
<feature type="binding site" evidence="1">
    <location>
        <begin position="175"/>
        <end position="177"/>
    </location>
    <ligand>
        <name>substrate</name>
    </ligand>
</feature>
<feature type="binding site" evidence="1">
    <location>
        <position position="179"/>
    </location>
    <ligand>
        <name>FMN</name>
        <dbReference type="ChEBI" id="CHEBI:58210"/>
    </ligand>
</feature>
<sequence>MQLLEQALARFAEVYGRAAEAADVVDHTACTLATCSASGWPQVRTVLLKGYDERGFAFYTNRHSRKGQALAENPRAAVCFHWAPLAEQVVIEGVVTPVAEAEADAYWAGRPRESQIGGWASHQSRGLESREVLEQRVAEYAARFPDGEAVPRPPHWSGYRLAPVRIEFWRARPGRLHERDVYEHTAEGWCHRLLNP</sequence>
<organism>
    <name type="scientific">Alkalilimnicola ehrlichii (strain ATCC BAA-1101 / DSM 17681 / MLHE-1)</name>
    <dbReference type="NCBI Taxonomy" id="187272"/>
    <lineage>
        <taxon>Bacteria</taxon>
        <taxon>Pseudomonadati</taxon>
        <taxon>Pseudomonadota</taxon>
        <taxon>Gammaproteobacteria</taxon>
        <taxon>Chromatiales</taxon>
        <taxon>Ectothiorhodospiraceae</taxon>
        <taxon>Alkalilimnicola</taxon>
    </lineage>
</organism>
<comment type="function">
    <text evidence="1">Catalyzes the oxidation of either pyridoxine 5'-phosphate (PNP) or pyridoxamine 5'-phosphate (PMP) into pyridoxal 5'-phosphate (PLP).</text>
</comment>
<comment type="catalytic activity">
    <reaction evidence="1">
        <text>pyridoxamine 5'-phosphate + O2 + H2O = pyridoxal 5'-phosphate + H2O2 + NH4(+)</text>
        <dbReference type="Rhea" id="RHEA:15817"/>
        <dbReference type="ChEBI" id="CHEBI:15377"/>
        <dbReference type="ChEBI" id="CHEBI:15379"/>
        <dbReference type="ChEBI" id="CHEBI:16240"/>
        <dbReference type="ChEBI" id="CHEBI:28938"/>
        <dbReference type="ChEBI" id="CHEBI:58451"/>
        <dbReference type="ChEBI" id="CHEBI:597326"/>
        <dbReference type="EC" id="1.4.3.5"/>
    </reaction>
</comment>
<comment type="catalytic activity">
    <reaction evidence="1">
        <text>pyridoxine 5'-phosphate + O2 = pyridoxal 5'-phosphate + H2O2</text>
        <dbReference type="Rhea" id="RHEA:15149"/>
        <dbReference type="ChEBI" id="CHEBI:15379"/>
        <dbReference type="ChEBI" id="CHEBI:16240"/>
        <dbReference type="ChEBI" id="CHEBI:58589"/>
        <dbReference type="ChEBI" id="CHEBI:597326"/>
        <dbReference type="EC" id="1.4.3.5"/>
    </reaction>
</comment>
<comment type="cofactor">
    <cofactor evidence="1">
        <name>FMN</name>
        <dbReference type="ChEBI" id="CHEBI:58210"/>
    </cofactor>
    <text evidence="1">Binds 1 FMN per subunit.</text>
</comment>
<comment type="pathway">
    <text evidence="1">Cofactor metabolism; pyridoxal 5'-phosphate salvage; pyridoxal 5'-phosphate from pyridoxamine 5'-phosphate: step 1/1.</text>
</comment>
<comment type="pathway">
    <text evidence="1">Cofactor metabolism; pyridoxal 5'-phosphate salvage; pyridoxal 5'-phosphate from pyridoxine 5'-phosphate: step 1/1.</text>
</comment>
<comment type="subunit">
    <text evidence="1">Homodimer.</text>
</comment>
<comment type="similarity">
    <text evidence="1">Belongs to the pyridoxamine 5'-phosphate oxidase family.</text>
</comment>
<dbReference type="EC" id="1.4.3.5" evidence="1"/>
<dbReference type="EMBL" id="CP000453">
    <property type="protein sequence ID" value="ABI57330.1"/>
    <property type="molecule type" value="Genomic_DNA"/>
</dbReference>
<dbReference type="RefSeq" id="WP_011629724.1">
    <property type="nucleotide sequence ID" value="NC_008340.1"/>
</dbReference>
<dbReference type="SMR" id="Q0A757"/>
<dbReference type="KEGG" id="aeh:Mlg_1988"/>
<dbReference type="eggNOG" id="COG0259">
    <property type="taxonomic scope" value="Bacteria"/>
</dbReference>
<dbReference type="HOGENOM" id="CLU_032263_2_3_6"/>
<dbReference type="OrthoDB" id="9780392at2"/>
<dbReference type="UniPathway" id="UPA01068">
    <property type="reaction ID" value="UER00304"/>
</dbReference>
<dbReference type="UniPathway" id="UPA01068">
    <property type="reaction ID" value="UER00305"/>
</dbReference>
<dbReference type="Proteomes" id="UP000001962">
    <property type="component" value="Chromosome"/>
</dbReference>
<dbReference type="GO" id="GO:0010181">
    <property type="term" value="F:FMN binding"/>
    <property type="evidence" value="ECO:0007669"/>
    <property type="project" value="UniProtKB-UniRule"/>
</dbReference>
<dbReference type="GO" id="GO:0004733">
    <property type="term" value="F:pyridoxamine phosphate oxidase activity"/>
    <property type="evidence" value="ECO:0007669"/>
    <property type="project" value="UniProtKB-UniRule"/>
</dbReference>
<dbReference type="GO" id="GO:0008615">
    <property type="term" value="P:pyridoxine biosynthetic process"/>
    <property type="evidence" value="ECO:0007669"/>
    <property type="project" value="UniProtKB-KW"/>
</dbReference>
<dbReference type="Gene3D" id="2.30.110.10">
    <property type="entry name" value="Electron Transport, Fmn-binding Protein, Chain A"/>
    <property type="match status" value="1"/>
</dbReference>
<dbReference type="HAMAP" id="MF_01629">
    <property type="entry name" value="PdxH"/>
    <property type="match status" value="1"/>
</dbReference>
<dbReference type="InterPro" id="IPR000659">
    <property type="entry name" value="Pyridox_Oxase"/>
</dbReference>
<dbReference type="InterPro" id="IPR019740">
    <property type="entry name" value="Pyridox_Oxase_CS"/>
</dbReference>
<dbReference type="InterPro" id="IPR011576">
    <property type="entry name" value="Pyridox_Oxase_N"/>
</dbReference>
<dbReference type="InterPro" id="IPR019576">
    <property type="entry name" value="Pyridoxamine_oxidase_dimer_C"/>
</dbReference>
<dbReference type="InterPro" id="IPR012349">
    <property type="entry name" value="Split_barrel_FMN-bd"/>
</dbReference>
<dbReference type="NCBIfam" id="TIGR00558">
    <property type="entry name" value="pdxH"/>
    <property type="match status" value="1"/>
</dbReference>
<dbReference type="NCBIfam" id="NF004231">
    <property type="entry name" value="PRK05679.1"/>
    <property type="match status" value="1"/>
</dbReference>
<dbReference type="PANTHER" id="PTHR10851:SF0">
    <property type="entry name" value="PYRIDOXINE-5'-PHOSPHATE OXIDASE"/>
    <property type="match status" value="1"/>
</dbReference>
<dbReference type="PANTHER" id="PTHR10851">
    <property type="entry name" value="PYRIDOXINE-5-PHOSPHATE OXIDASE"/>
    <property type="match status" value="1"/>
</dbReference>
<dbReference type="Pfam" id="PF10590">
    <property type="entry name" value="PNP_phzG_C"/>
    <property type="match status" value="1"/>
</dbReference>
<dbReference type="Pfam" id="PF01243">
    <property type="entry name" value="PNPOx_N"/>
    <property type="match status" value="1"/>
</dbReference>
<dbReference type="PIRSF" id="PIRSF000190">
    <property type="entry name" value="Pyd_amn-ph_oxd"/>
    <property type="match status" value="1"/>
</dbReference>
<dbReference type="SUPFAM" id="SSF50475">
    <property type="entry name" value="FMN-binding split barrel"/>
    <property type="match status" value="1"/>
</dbReference>
<dbReference type="PROSITE" id="PS01064">
    <property type="entry name" value="PYRIDOX_OXIDASE"/>
    <property type="match status" value="1"/>
</dbReference>
<reference key="1">
    <citation type="submission" date="2006-08" db="EMBL/GenBank/DDBJ databases">
        <title>Complete sequence of Alkalilimnicola ehrilichei MLHE-1.</title>
        <authorList>
            <person name="Copeland A."/>
            <person name="Lucas S."/>
            <person name="Lapidus A."/>
            <person name="Barry K."/>
            <person name="Detter J.C."/>
            <person name="Glavina del Rio T."/>
            <person name="Hammon N."/>
            <person name="Israni S."/>
            <person name="Dalin E."/>
            <person name="Tice H."/>
            <person name="Pitluck S."/>
            <person name="Sims D."/>
            <person name="Brettin T."/>
            <person name="Bruce D."/>
            <person name="Han C."/>
            <person name="Tapia R."/>
            <person name="Gilna P."/>
            <person name="Schmutz J."/>
            <person name="Larimer F."/>
            <person name="Land M."/>
            <person name="Hauser L."/>
            <person name="Kyrpides N."/>
            <person name="Mikhailova N."/>
            <person name="Oremland R.S."/>
            <person name="Hoeft S.E."/>
            <person name="Switzer-Blum J."/>
            <person name="Kulp T."/>
            <person name="King G."/>
            <person name="Tabita R."/>
            <person name="Witte B."/>
            <person name="Santini J.M."/>
            <person name="Basu P."/>
            <person name="Hollibaugh J.T."/>
            <person name="Xie G."/>
            <person name="Stolz J.F."/>
            <person name="Richardson P."/>
        </authorList>
    </citation>
    <scope>NUCLEOTIDE SEQUENCE [LARGE SCALE GENOMIC DNA]</scope>
    <source>
        <strain>ATCC BAA-1101 / DSM 17681 / MLHE-1</strain>
    </source>
</reference>
<evidence type="ECO:0000255" key="1">
    <source>
        <dbReference type="HAMAP-Rule" id="MF_01629"/>
    </source>
</evidence>
<name>PDXH_ALKEH</name>
<accession>Q0A757</accession>
<proteinExistence type="inferred from homology"/>
<gene>
    <name evidence="1" type="primary">pdxH</name>
    <name type="ordered locus">Mlg_1988</name>
</gene>
<protein>
    <recommendedName>
        <fullName evidence="1">Pyridoxine/pyridoxamine 5'-phosphate oxidase</fullName>
        <ecNumber evidence="1">1.4.3.5</ecNumber>
    </recommendedName>
    <alternativeName>
        <fullName evidence="1">PNP/PMP oxidase</fullName>
        <shortName evidence="1">PNPOx</shortName>
    </alternativeName>
    <alternativeName>
        <fullName evidence="1">Pyridoxal 5'-phosphate synthase</fullName>
    </alternativeName>
</protein>
<keyword id="KW-0285">Flavoprotein</keyword>
<keyword id="KW-0288">FMN</keyword>
<keyword id="KW-0560">Oxidoreductase</keyword>
<keyword id="KW-0664">Pyridoxine biosynthesis</keyword>
<keyword id="KW-1185">Reference proteome</keyword>